<dbReference type="EC" id="4.1.99.1" evidence="1"/>
<dbReference type="EMBL" id="CP000527">
    <property type="protein sequence ID" value="ABM28052.1"/>
    <property type="molecule type" value="Genomic_DNA"/>
</dbReference>
<dbReference type="RefSeq" id="WP_010939479.1">
    <property type="nucleotide sequence ID" value="NC_008751.1"/>
</dbReference>
<dbReference type="SMR" id="A1VC86"/>
<dbReference type="KEGG" id="dvl:Dvul_1032"/>
<dbReference type="HOGENOM" id="CLU_047223_0_0_7"/>
<dbReference type="UniPathway" id="UPA00332">
    <property type="reaction ID" value="UER00452"/>
</dbReference>
<dbReference type="Proteomes" id="UP000009173">
    <property type="component" value="Chromosome"/>
</dbReference>
<dbReference type="GO" id="GO:0009034">
    <property type="term" value="F:tryptophanase activity"/>
    <property type="evidence" value="ECO:0007669"/>
    <property type="project" value="UniProtKB-UniRule"/>
</dbReference>
<dbReference type="CDD" id="cd00617">
    <property type="entry name" value="Tnase_like"/>
    <property type="match status" value="1"/>
</dbReference>
<dbReference type="Gene3D" id="3.90.1150.10">
    <property type="entry name" value="Aspartate Aminotransferase, domain 1"/>
    <property type="match status" value="1"/>
</dbReference>
<dbReference type="Gene3D" id="3.40.640.10">
    <property type="entry name" value="Type I PLP-dependent aspartate aminotransferase-like (Major domain)"/>
    <property type="match status" value="1"/>
</dbReference>
<dbReference type="HAMAP" id="MF_00544">
    <property type="entry name" value="Tryptophanase"/>
    <property type="match status" value="1"/>
</dbReference>
<dbReference type="InterPro" id="IPR001597">
    <property type="entry name" value="ArAA_b-elim_lyase/Thr_aldolase"/>
</dbReference>
<dbReference type="InterPro" id="IPR011166">
    <property type="entry name" value="Beta-eliminating_lyase"/>
</dbReference>
<dbReference type="InterPro" id="IPR015424">
    <property type="entry name" value="PyrdxlP-dep_Trfase"/>
</dbReference>
<dbReference type="InterPro" id="IPR015421">
    <property type="entry name" value="PyrdxlP-dep_Trfase_major"/>
</dbReference>
<dbReference type="InterPro" id="IPR015422">
    <property type="entry name" value="PyrdxlP-dep_Trfase_small"/>
</dbReference>
<dbReference type="InterPro" id="IPR013440">
    <property type="entry name" value="TNase"/>
</dbReference>
<dbReference type="NCBIfam" id="NF009709">
    <property type="entry name" value="PRK13238.1"/>
    <property type="match status" value="1"/>
</dbReference>
<dbReference type="PANTHER" id="PTHR32325">
    <property type="entry name" value="BETA-ELIMINATING LYASE-LIKE PROTEIN-RELATED"/>
    <property type="match status" value="1"/>
</dbReference>
<dbReference type="PANTHER" id="PTHR32325:SF4">
    <property type="entry name" value="TRYPTOPHANASE"/>
    <property type="match status" value="1"/>
</dbReference>
<dbReference type="Pfam" id="PF01212">
    <property type="entry name" value="Beta_elim_lyase"/>
    <property type="match status" value="1"/>
</dbReference>
<dbReference type="PIRSF" id="PIRSF001386">
    <property type="entry name" value="Trpase"/>
    <property type="match status" value="1"/>
</dbReference>
<dbReference type="SUPFAM" id="SSF53383">
    <property type="entry name" value="PLP-dependent transferases"/>
    <property type="match status" value="1"/>
</dbReference>
<comment type="catalytic activity">
    <reaction evidence="1">
        <text>L-tryptophan + H2O = indole + pyruvate + NH4(+)</text>
        <dbReference type="Rhea" id="RHEA:19553"/>
        <dbReference type="ChEBI" id="CHEBI:15361"/>
        <dbReference type="ChEBI" id="CHEBI:15377"/>
        <dbReference type="ChEBI" id="CHEBI:16881"/>
        <dbReference type="ChEBI" id="CHEBI:28938"/>
        <dbReference type="ChEBI" id="CHEBI:57912"/>
        <dbReference type="EC" id="4.1.99.1"/>
    </reaction>
</comment>
<comment type="cofactor">
    <cofactor evidence="1">
        <name>pyridoxal 5'-phosphate</name>
        <dbReference type="ChEBI" id="CHEBI:597326"/>
    </cofactor>
</comment>
<comment type="pathway">
    <text evidence="1">Amino-acid degradation; L-tryptophan degradation via pyruvate pathway; indole and pyruvate from L-tryptophan: step 1/1.</text>
</comment>
<comment type="subunit">
    <text evidence="1">Homotetramer.</text>
</comment>
<comment type="similarity">
    <text evidence="1">Belongs to the beta-eliminating lyase family.</text>
</comment>
<gene>
    <name evidence="1" type="primary">tnaA</name>
    <name type="ordered locus">Dvul_1032</name>
</gene>
<accession>A1VC86</accession>
<evidence type="ECO:0000255" key="1">
    <source>
        <dbReference type="HAMAP-Rule" id="MF_00544"/>
    </source>
</evidence>
<sequence length="462" mass="51358">MKRIPEPFRIKMIEPIRMTTLEDRTRALEEAGYNPFLLKSEDVYIDLLTDSGTGAMSDRQWAGLMMGDEAYAGSRNFLNLEKAVKDVFGYEHTVPTHQGRGAEQILFPCLVARMKGDKPVFISNYHFDTTAAHVEMTGAKAINVVTEKAFDTGTYYDWKGDFDLEKLEATIRQHGAQNVAGIIVTITCNSAGGQPVSMANIREAAAIAKRHGITVIIDSARFCENAWFIKQREAGYADKSIREIIREMYSYGDVLTCSAKKDPIVNIGGLCCIKEDVDLFRAVQVRCVPMEGFVTYGGLAGRDMEALAIGLYEGTDEHFLTYRIKQVEYLGERLRQGGVPIQYPTGGHAVFIDAKLMLPHIPGNQFPAHALANEVYIEGGVRGVEIGSLLLGRDPATGLQKESPLELLRLAIPRRVYTNDHMDYIADTVIAVLDRASSIKGLEFTYEPPVLRHFTARLRPIA</sequence>
<protein>
    <recommendedName>
        <fullName evidence="1">Tryptophanase</fullName>
        <ecNumber evidence="1">4.1.99.1</ecNumber>
    </recommendedName>
    <alternativeName>
        <fullName evidence="1">L-tryptophan indole-lyase</fullName>
        <shortName evidence="1">TNase</shortName>
    </alternativeName>
</protein>
<keyword id="KW-0456">Lyase</keyword>
<keyword id="KW-0663">Pyridoxal phosphate</keyword>
<keyword id="KW-0823">Tryptophan catabolism</keyword>
<organism>
    <name type="scientific">Nitratidesulfovibrio vulgaris (strain DP4)</name>
    <name type="common">Desulfovibrio vulgaris</name>
    <dbReference type="NCBI Taxonomy" id="391774"/>
    <lineage>
        <taxon>Bacteria</taxon>
        <taxon>Pseudomonadati</taxon>
        <taxon>Thermodesulfobacteriota</taxon>
        <taxon>Desulfovibrionia</taxon>
        <taxon>Desulfovibrionales</taxon>
        <taxon>Desulfovibrionaceae</taxon>
        <taxon>Nitratidesulfovibrio</taxon>
    </lineage>
</organism>
<proteinExistence type="inferred from homology"/>
<reference key="1">
    <citation type="journal article" date="2009" name="Environ. Microbiol.">
        <title>Contribution of mobile genetic elements to Desulfovibrio vulgaris genome plasticity.</title>
        <authorList>
            <person name="Walker C.B."/>
            <person name="Stolyar S."/>
            <person name="Chivian D."/>
            <person name="Pinel N."/>
            <person name="Gabster J.A."/>
            <person name="Dehal P.S."/>
            <person name="He Z."/>
            <person name="Yang Z.K."/>
            <person name="Yen H.C."/>
            <person name="Zhou J."/>
            <person name="Wall J.D."/>
            <person name="Hazen T.C."/>
            <person name="Arkin A.P."/>
            <person name="Stahl D.A."/>
        </authorList>
    </citation>
    <scope>NUCLEOTIDE SEQUENCE [LARGE SCALE GENOMIC DNA]</scope>
    <source>
        <strain>DP4</strain>
    </source>
</reference>
<feature type="chain" id="PRO_1000061071" description="Tryptophanase">
    <location>
        <begin position="1"/>
        <end position="462"/>
    </location>
</feature>
<feature type="modified residue" description="N6-(pyridoxal phosphate)lysine" evidence="1">
    <location>
        <position position="261"/>
    </location>
</feature>
<name>TNAA_NITV4</name>